<keyword id="KW-0963">Cytoplasm</keyword>
<keyword id="KW-0560">Oxidoreductase</keyword>
<accession>B1XDH5</accession>
<comment type="function">
    <text evidence="1">Catalyzes the formation of sulfite from phosphoadenosine 5'-phosphosulfate (PAPS) using thioredoxin as an electron donor.</text>
</comment>
<comment type="catalytic activity">
    <reaction evidence="1">
        <text>[thioredoxin]-disulfide + sulfite + adenosine 3',5'-bisphosphate + 2 H(+) = [thioredoxin]-dithiol + 3'-phosphoadenylyl sulfate</text>
        <dbReference type="Rhea" id="RHEA:11724"/>
        <dbReference type="Rhea" id="RHEA-COMP:10698"/>
        <dbReference type="Rhea" id="RHEA-COMP:10700"/>
        <dbReference type="ChEBI" id="CHEBI:15378"/>
        <dbReference type="ChEBI" id="CHEBI:17359"/>
        <dbReference type="ChEBI" id="CHEBI:29950"/>
        <dbReference type="ChEBI" id="CHEBI:50058"/>
        <dbReference type="ChEBI" id="CHEBI:58339"/>
        <dbReference type="ChEBI" id="CHEBI:58343"/>
        <dbReference type="EC" id="1.8.4.8"/>
    </reaction>
</comment>
<comment type="pathway">
    <text evidence="1">Sulfur metabolism; hydrogen sulfide biosynthesis; sulfite from sulfate: step 3/3.</text>
</comment>
<comment type="subcellular location">
    <subcellularLocation>
        <location evidence="1">Cytoplasm</location>
    </subcellularLocation>
</comment>
<comment type="similarity">
    <text evidence="1">Belongs to the PAPS reductase family. CysH subfamily.</text>
</comment>
<feature type="chain" id="PRO_1000092172" description="Phosphoadenosine 5'-phosphosulfate reductase">
    <location>
        <begin position="1"/>
        <end position="244"/>
    </location>
</feature>
<feature type="active site" description="Nucleophile; cysteine thiosulfonate intermediate" evidence="1">
    <location>
        <position position="239"/>
    </location>
</feature>
<sequence length="244" mass="27976">MSKLDLNALNELPKVDRILALAETNAELEKLDAEGRVAWALDNLPGEYVLSSSFGIQAAVSLHLVNQIRPDIPVILTDTGYLFPETYRFIDELTDKLKLNLKVYRATESAAWQEARYGKLWEQGVEGIEKYNDINKVEPMNRALKELNAQTWFAGLRREQSGSRANLPVLAIQRGVFKVLPIIDWDNRTIYQYLQKHGLKYHPLWDEGYLSVGDTHTTRKWEPGMAEEETRFFGLKRECGLHEG</sequence>
<dbReference type="EC" id="1.8.4.8" evidence="1"/>
<dbReference type="EMBL" id="CP000948">
    <property type="protein sequence ID" value="ACB03879.1"/>
    <property type="molecule type" value="Genomic_DNA"/>
</dbReference>
<dbReference type="RefSeq" id="WP_000039850.1">
    <property type="nucleotide sequence ID" value="NC_010473.1"/>
</dbReference>
<dbReference type="SMR" id="B1XDH5"/>
<dbReference type="GeneID" id="75058622"/>
<dbReference type="KEGG" id="ecd:ECDH10B_2930"/>
<dbReference type="HOGENOM" id="CLU_044089_3_0_6"/>
<dbReference type="UniPathway" id="UPA00140">
    <property type="reaction ID" value="UER00206"/>
</dbReference>
<dbReference type="GO" id="GO:0005737">
    <property type="term" value="C:cytoplasm"/>
    <property type="evidence" value="ECO:0007669"/>
    <property type="project" value="UniProtKB-SubCell"/>
</dbReference>
<dbReference type="GO" id="GO:0004604">
    <property type="term" value="F:phosphoadenylyl-sulfate reductase (thioredoxin) activity"/>
    <property type="evidence" value="ECO:0007669"/>
    <property type="project" value="UniProtKB-UniRule"/>
</dbReference>
<dbReference type="GO" id="GO:0070814">
    <property type="term" value="P:hydrogen sulfide biosynthetic process"/>
    <property type="evidence" value="ECO:0007669"/>
    <property type="project" value="UniProtKB-UniRule"/>
</dbReference>
<dbReference type="GO" id="GO:0019379">
    <property type="term" value="P:sulfate assimilation, phosphoadenylyl sulfate reduction by phosphoadenylyl-sulfate reductase (thioredoxin)"/>
    <property type="evidence" value="ECO:0007669"/>
    <property type="project" value="UniProtKB-UniRule"/>
</dbReference>
<dbReference type="CDD" id="cd23945">
    <property type="entry name" value="PAPS_reductase"/>
    <property type="match status" value="1"/>
</dbReference>
<dbReference type="FunFam" id="3.40.50.620:FF:000043">
    <property type="entry name" value="Phosphoadenosine phosphosulfate reductase"/>
    <property type="match status" value="1"/>
</dbReference>
<dbReference type="Gene3D" id="3.40.50.620">
    <property type="entry name" value="HUPs"/>
    <property type="match status" value="1"/>
</dbReference>
<dbReference type="HAMAP" id="MF_00063">
    <property type="entry name" value="CysH"/>
    <property type="match status" value="1"/>
</dbReference>
<dbReference type="InterPro" id="IPR004511">
    <property type="entry name" value="PAPS/APS_Rdtase"/>
</dbReference>
<dbReference type="InterPro" id="IPR002500">
    <property type="entry name" value="PAPS_reduct_dom"/>
</dbReference>
<dbReference type="InterPro" id="IPR011800">
    <property type="entry name" value="PAPS_reductase_CysH"/>
</dbReference>
<dbReference type="InterPro" id="IPR014729">
    <property type="entry name" value="Rossmann-like_a/b/a_fold"/>
</dbReference>
<dbReference type="NCBIfam" id="TIGR00434">
    <property type="entry name" value="cysH"/>
    <property type="match status" value="1"/>
</dbReference>
<dbReference type="NCBIfam" id="TIGR02057">
    <property type="entry name" value="PAPS_reductase"/>
    <property type="match status" value="1"/>
</dbReference>
<dbReference type="NCBIfam" id="NF002537">
    <property type="entry name" value="PRK02090.1"/>
    <property type="match status" value="1"/>
</dbReference>
<dbReference type="PANTHER" id="PTHR46509">
    <property type="entry name" value="PHOSPHOADENOSINE PHOSPHOSULFATE REDUCTASE"/>
    <property type="match status" value="1"/>
</dbReference>
<dbReference type="PANTHER" id="PTHR46509:SF1">
    <property type="entry name" value="PHOSPHOADENOSINE PHOSPHOSULFATE REDUCTASE"/>
    <property type="match status" value="1"/>
</dbReference>
<dbReference type="Pfam" id="PF01507">
    <property type="entry name" value="PAPS_reduct"/>
    <property type="match status" value="1"/>
</dbReference>
<dbReference type="PIRSF" id="PIRSF000857">
    <property type="entry name" value="PAPS_reductase"/>
    <property type="match status" value="1"/>
</dbReference>
<dbReference type="SUPFAM" id="SSF52402">
    <property type="entry name" value="Adenine nucleotide alpha hydrolases-like"/>
    <property type="match status" value="1"/>
</dbReference>
<reference key="1">
    <citation type="journal article" date="2008" name="J. Bacteriol.">
        <title>The complete genome sequence of Escherichia coli DH10B: insights into the biology of a laboratory workhorse.</title>
        <authorList>
            <person name="Durfee T."/>
            <person name="Nelson R."/>
            <person name="Baldwin S."/>
            <person name="Plunkett G. III"/>
            <person name="Burland V."/>
            <person name="Mau B."/>
            <person name="Petrosino J.F."/>
            <person name="Qin X."/>
            <person name="Muzny D.M."/>
            <person name="Ayele M."/>
            <person name="Gibbs R.A."/>
            <person name="Csorgo B."/>
            <person name="Posfai G."/>
            <person name="Weinstock G.M."/>
            <person name="Blattner F.R."/>
        </authorList>
    </citation>
    <scope>NUCLEOTIDE SEQUENCE [LARGE SCALE GENOMIC DNA]</scope>
    <source>
        <strain>K12 / DH10B</strain>
    </source>
</reference>
<organism>
    <name type="scientific">Escherichia coli (strain K12 / DH10B)</name>
    <dbReference type="NCBI Taxonomy" id="316385"/>
    <lineage>
        <taxon>Bacteria</taxon>
        <taxon>Pseudomonadati</taxon>
        <taxon>Pseudomonadota</taxon>
        <taxon>Gammaproteobacteria</taxon>
        <taxon>Enterobacterales</taxon>
        <taxon>Enterobacteriaceae</taxon>
        <taxon>Escherichia</taxon>
    </lineage>
</organism>
<gene>
    <name evidence="1" type="primary">cysH</name>
    <name type="ordered locus">ECDH10B_2930</name>
</gene>
<evidence type="ECO:0000255" key="1">
    <source>
        <dbReference type="HAMAP-Rule" id="MF_00063"/>
    </source>
</evidence>
<protein>
    <recommendedName>
        <fullName evidence="1">Phosphoadenosine 5'-phosphosulfate reductase</fullName>
        <shortName evidence="1">PAPS reductase</shortName>
        <ecNumber evidence="1">1.8.4.8</ecNumber>
    </recommendedName>
    <alternativeName>
        <fullName evidence="1">3'-phosphoadenylylsulfate reductase</fullName>
    </alternativeName>
    <alternativeName>
        <fullName evidence="1">PAPS reductase, thioredoxin dependent</fullName>
    </alternativeName>
    <alternativeName>
        <fullName evidence="1">PAPS sulfotransferase</fullName>
    </alternativeName>
    <alternativeName>
        <fullName evidence="1">PAdoPS reductase</fullName>
    </alternativeName>
</protein>
<proteinExistence type="inferred from homology"/>
<name>CYSH_ECODH</name>